<protein>
    <recommendedName>
        <fullName evidence="1">Large ribosomal subunit protein bL20</fullName>
    </recommendedName>
    <alternativeName>
        <fullName evidence="2">50S ribosomal protein L20</fullName>
    </alternativeName>
</protein>
<gene>
    <name evidence="1" type="primary">rplT</name>
    <name type="ordered locus">ABO_1839</name>
</gene>
<dbReference type="EMBL" id="AM286690">
    <property type="protein sequence ID" value="CAL17287.1"/>
    <property type="molecule type" value="Genomic_DNA"/>
</dbReference>
<dbReference type="RefSeq" id="WP_007151143.1">
    <property type="nucleotide sequence ID" value="NC_008260.1"/>
</dbReference>
<dbReference type="SMR" id="Q0VNG1"/>
<dbReference type="STRING" id="393595.ABO_1839"/>
<dbReference type="KEGG" id="abo:ABO_1839"/>
<dbReference type="eggNOG" id="COG0292">
    <property type="taxonomic scope" value="Bacteria"/>
</dbReference>
<dbReference type="HOGENOM" id="CLU_123265_0_1_6"/>
<dbReference type="OrthoDB" id="9808966at2"/>
<dbReference type="Proteomes" id="UP000008871">
    <property type="component" value="Chromosome"/>
</dbReference>
<dbReference type="GO" id="GO:1990904">
    <property type="term" value="C:ribonucleoprotein complex"/>
    <property type="evidence" value="ECO:0007669"/>
    <property type="project" value="UniProtKB-KW"/>
</dbReference>
<dbReference type="GO" id="GO:0005840">
    <property type="term" value="C:ribosome"/>
    <property type="evidence" value="ECO:0007669"/>
    <property type="project" value="UniProtKB-KW"/>
</dbReference>
<dbReference type="GO" id="GO:0019843">
    <property type="term" value="F:rRNA binding"/>
    <property type="evidence" value="ECO:0007669"/>
    <property type="project" value="UniProtKB-UniRule"/>
</dbReference>
<dbReference type="GO" id="GO:0003735">
    <property type="term" value="F:structural constituent of ribosome"/>
    <property type="evidence" value="ECO:0007669"/>
    <property type="project" value="InterPro"/>
</dbReference>
<dbReference type="GO" id="GO:0000027">
    <property type="term" value="P:ribosomal large subunit assembly"/>
    <property type="evidence" value="ECO:0007669"/>
    <property type="project" value="UniProtKB-UniRule"/>
</dbReference>
<dbReference type="GO" id="GO:0006412">
    <property type="term" value="P:translation"/>
    <property type="evidence" value="ECO:0007669"/>
    <property type="project" value="InterPro"/>
</dbReference>
<dbReference type="CDD" id="cd07026">
    <property type="entry name" value="Ribosomal_L20"/>
    <property type="match status" value="1"/>
</dbReference>
<dbReference type="FunFam" id="1.10.1900.20:FF:000001">
    <property type="entry name" value="50S ribosomal protein L20"/>
    <property type="match status" value="1"/>
</dbReference>
<dbReference type="Gene3D" id="6.10.160.10">
    <property type="match status" value="1"/>
</dbReference>
<dbReference type="Gene3D" id="1.10.1900.20">
    <property type="entry name" value="Ribosomal protein L20"/>
    <property type="match status" value="1"/>
</dbReference>
<dbReference type="HAMAP" id="MF_00382">
    <property type="entry name" value="Ribosomal_bL20"/>
    <property type="match status" value="1"/>
</dbReference>
<dbReference type="InterPro" id="IPR005813">
    <property type="entry name" value="Ribosomal_bL20"/>
</dbReference>
<dbReference type="InterPro" id="IPR049946">
    <property type="entry name" value="RIBOSOMAL_L20_CS"/>
</dbReference>
<dbReference type="InterPro" id="IPR035566">
    <property type="entry name" value="Ribosomal_protein_bL20_C"/>
</dbReference>
<dbReference type="NCBIfam" id="TIGR01032">
    <property type="entry name" value="rplT_bact"/>
    <property type="match status" value="1"/>
</dbReference>
<dbReference type="PANTHER" id="PTHR10986">
    <property type="entry name" value="39S RIBOSOMAL PROTEIN L20"/>
    <property type="match status" value="1"/>
</dbReference>
<dbReference type="Pfam" id="PF00453">
    <property type="entry name" value="Ribosomal_L20"/>
    <property type="match status" value="1"/>
</dbReference>
<dbReference type="PRINTS" id="PR00062">
    <property type="entry name" value="RIBOSOMALL20"/>
</dbReference>
<dbReference type="SUPFAM" id="SSF74731">
    <property type="entry name" value="Ribosomal protein L20"/>
    <property type="match status" value="1"/>
</dbReference>
<dbReference type="PROSITE" id="PS00937">
    <property type="entry name" value="RIBOSOMAL_L20"/>
    <property type="match status" value="1"/>
</dbReference>
<evidence type="ECO:0000255" key="1">
    <source>
        <dbReference type="HAMAP-Rule" id="MF_00382"/>
    </source>
</evidence>
<evidence type="ECO:0000305" key="2"/>
<organism>
    <name type="scientific">Alcanivorax borkumensis (strain ATCC 700651 / DSM 11573 / NCIMB 13689 / SK2)</name>
    <dbReference type="NCBI Taxonomy" id="393595"/>
    <lineage>
        <taxon>Bacteria</taxon>
        <taxon>Pseudomonadati</taxon>
        <taxon>Pseudomonadota</taxon>
        <taxon>Gammaproteobacteria</taxon>
        <taxon>Oceanospirillales</taxon>
        <taxon>Alcanivoracaceae</taxon>
        <taxon>Alcanivorax</taxon>
    </lineage>
</organism>
<keyword id="KW-1185">Reference proteome</keyword>
<keyword id="KW-0687">Ribonucleoprotein</keyword>
<keyword id="KW-0689">Ribosomal protein</keyword>
<keyword id="KW-0694">RNA-binding</keyword>
<keyword id="KW-0699">rRNA-binding</keyword>
<sequence length="119" mass="13571">MARVKRGVQARRRHKKILKQAKGYYGARSRVFRVAVQAVTKAGQYAYRDRKVRKRQFRRLWIVRINAAARLNGLSYSRLINGLKKASIDIDRKVLADIAVRDQATFSALAEKAKASLTA</sequence>
<feature type="chain" id="PRO_1000048922" description="Large ribosomal subunit protein bL20">
    <location>
        <begin position="1"/>
        <end position="119"/>
    </location>
</feature>
<name>RL20_ALCBS</name>
<accession>Q0VNG1</accession>
<proteinExistence type="inferred from homology"/>
<comment type="function">
    <text evidence="1">Binds directly to 23S ribosomal RNA and is necessary for the in vitro assembly process of the 50S ribosomal subunit. It is not involved in the protein synthesizing functions of that subunit.</text>
</comment>
<comment type="similarity">
    <text evidence="1">Belongs to the bacterial ribosomal protein bL20 family.</text>
</comment>
<reference key="1">
    <citation type="journal article" date="2006" name="Nat. Biotechnol.">
        <title>Genome sequence of the ubiquitous hydrocarbon-degrading marine bacterium Alcanivorax borkumensis.</title>
        <authorList>
            <person name="Schneiker S."/>
            <person name="Martins dos Santos V.A.P."/>
            <person name="Bartels D."/>
            <person name="Bekel T."/>
            <person name="Brecht M."/>
            <person name="Buhrmester J."/>
            <person name="Chernikova T.N."/>
            <person name="Denaro R."/>
            <person name="Ferrer M."/>
            <person name="Gertler C."/>
            <person name="Goesmann A."/>
            <person name="Golyshina O.V."/>
            <person name="Kaminski F."/>
            <person name="Khachane A.N."/>
            <person name="Lang S."/>
            <person name="Linke B."/>
            <person name="McHardy A.C."/>
            <person name="Meyer F."/>
            <person name="Nechitaylo T."/>
            <person name="Puehler A."/>
            <person name="Regenhardt D."/>
            <person name="Rupp O."/>
            <person name="Sabirova J.S."/>
            <person name="Selbitschka W."/>
            <person name="Yakimov M.M."/>
            <person name="Timmis K.N."/>
            <person name="Vorhoelter F.-J."/>
            <person name="Weidner S."/>
            <person name="Kaiser O."/>
            <person name="Golyshin P.N."/>
        </authorList>
    </citation>
    <scope>NUCLEOTIDE SEQUENCE [LARGE SCALE GENOMIC DNA]</scope>
    <source>
        <strain>ATCC 700651 / DSM 11573 / NCIMB 13689 / SK2</strain>
    </source>
</reference>